<accession>Q55CM7</accession>
<dbReference type="EMBL" id="AAFI02000005">
    <property type="protein sequence ID" value="EAL72347.1"/>
    <property type="molecule type" value="Genomic_DNA"/>
</dbReference>
<dbReference type="RefSeq" id="XP_646454.1">
    <property type="nucleotide sequence ID" value="XM_641362.1"/>
</dbReference>
<dbReference type="SMR" id="Q55CM7"/>
<dbReference type="FunCoup" id="Q55CM7">
    <property type="interactions" value="18"/>
</dbReference>
<dbReference type="STRING" id="44689.Q55CM7"/>
<dbReference type="PaxDb" id="44689-DDB0190724"/>
<dbReference type="EnsemblProtists" id="EAL72347">
    <property type="protein sequence ID" value="EAL72347"/>
    <property type="gene ID" value="DDB_G0269994"/>
</dbReference>
<dbReference type="GeneID" id="8617414"/>
<dbReference type="KEGG" id="ddi:DDB_G0269994"/>
<dbReference type="dictyBase" id="DDB_G0269994"/>
<dbReference type="VEuPathDB" id="AmoebaDB:DDB_G0269994"/>
<dbReference type="eggNOG" id="KOG3054">
    <property type="taxonomic scope" value="Eukaryota"/>
</dbReference>
<dbReference type="HOGENOM" id="CLU_059562_1_0_1"/>
<dbReference type="InParanoid" id="Q55CM7"/>
<dbReference type="OMA" id="EFTRECN"/>
<dbReference type="PRO" id="PR:Q55CM7"/>
<dbReference type="Proteomes" id="UP000002195">
    <property type="component" value="Chromosome 1"/>
</dbReference>
<dbReference type="GO" id="GO:0005789">
    <property type="term" value="C:endoplasmic reticulum membrane"/>
    <property type="evidence" value="ECO:0007669"/>
    <property type="project" value="UniProtKB-SubCell"/>
</dbReference>
<dbReference type="GO" id="GO:0044389">
    <property type="term" value="F:ubiquitin-like protein ligase binding"/>
    <property type="evidence" value="ECO:0000318"/>
    <property type="project" value="GO_Central"/>
</dbReference>
<dbReference type="FunFam" id="1.10.10.10:FF:000143">
    <property type="entry name" value="DDRGK domain-containing protein 1"/>
    <property type="match status" value="1"/>
</dbReference>
<dbReference type="Gene3D" id="1.10.10.10">
    <property type="entry name" value="Winged helix-like DNA-binding domain superfamily/Winged helix DNA-binding domain"/>
    <property type="match status" value="1"/>
</dbReference>
<dbReference type="InterPro" id="IPR019153">
    <property type="entry name" value="DDRGK_dom-contain"/>
</dbReference>
<dbReference type="InterPro" id="IPR050899">
    <property type="entry name" value="DDRGK_domain-containing"/>
</dbReference>
<dbReference type="InterPro" id="IPR036388">
    <property type="entry name" value="WH-like_DNA-bd_sf"/>
</dbReference>
<dbReference type="InterPro" id="IPR036390">
    <property type="entry name" value="WH_DNA-bd_sf"/>
</dbReference>
<dbReference type="PANTHER" id="PTHR48176">
    <property type="entry name" value="DDRGK DOMAIN-CONTAINING PROTEIN 1"/>
    <property type="match status" value="1"/>
</dbReference>
<dbReference type="PANTHER" id="PTHR48176:SF1">
    <property type="entry name" value="DDRGK DOMAIN-CONTAINING PROTEIN 1"/>
    <property type="match status" value="1"/>
</dbReference>
<dbReference type="Pfam" id="PF09756">
    <property type="entry name" value="DDRGK"/>
    <property type="match status" value="1"/>
</dbReference>
<dbReference type="SMART" id="SM01128">
    <property type="entry name" value="DDRGK"/>
    <property type="match status" value="1"/>
</dbReference>
<dbReference type="SUPFAM" id="SSF46785">
    <property type="entry name" value="Winged helix' DNA-binding domain"/>
    <property type="match status" value="1"/>
</dbReference>
<comment type="function">
    <text evidence="1">Substrate adapter for ufmylation, the covalent attachment of the ubiquitin-like modifier UFM1 to substrate proteins.</text>
</comment>
<comment type="subcellular location">
    <subcellularLocation>
        <location evidence="1">Endoplasmic reticulum membrane</location>
        <topology evidence="1">Single-pass membrane protein</topology>
    </subcellularLocation>
</comment>
<comment type="similarity">
    <text evidence="4">Belongs to the DDRGK1 family.</text>
</comment>
<keyword id="KW-0256">Endoplasmic reticulum</keyword>
<keyword id="KW-0472">Membrane</keyword>
<keyword id="KW-1185">Reference proteome</keyword>
<keyword id="KW-0812">Transmembrane</keyword>
<keyword id="KW-1133">Transmembrane helix</keyword>
<keyword id="KW-0833">Ubl conjugation pathway</keyword>
<evidence type="ECO:0000250" key="1">
    <source>
        <dbReference type="UniProtKB" id="Q96HY6"/>
    </source>
</evidence>
<evidence type="ECO:0000255" key="2"/>
<evidence type="ECO:0000256" key="3">
    <source>
        <dbReference type="SAM" id="MobiDB-lite"/>
    </source>
</evidence>
<evidence type="ECO:0000305" key="4"/>
<name>DDRGK_DICDI</name>
<feature type="chain" id="PRO_0000391869" description="DDRGK domain-containing protein 1">
    <location>
        <begin position="1"/>
        <end position="335"/>
    </location>
</feature>
<feature type="topological domain" description="Lumenal" evidence="4">
    <location>
        <begin position="1"/>
        <end position="6"/>
    </location>
</feature>
<feature type="transmembrane region" description="Helical" evidence="2">
    <location>
        <begin position="7"/>
        <end position="27"/>
    </location>
</feature>
<feature type="topological domain" description="Cytoplasmic" evidence="4">
    <location>
        <begin position="28"/>
        <end position="335"/>
    </location>
</feature>
<feature type="region of interest" description="Disordered" evidence="3">
    <location>
        <begin position="37"/>
        <end position="124"/>
    </location>
</feature>
<feature type="compositionally biased region" description="Low complexity" evidence="3">
    <location>
        <begin position="41"/>
        <end position="56"/>
    </location>
</feature>
<feature type="compositionally biased region" description="Low complexity" evidence="3">
    <location>
        <begin position="91"/>
        <end position="103"/>
    </location>
</feature>
<feature type="compositionally biased region" description="Acidic residues" evidence="3">
    <location>
        <begin position="104"/>
        <end position="117"/>
    </location>
</feature>
<organism>
    <name type="scientific">Dictyostelium discoideum</name>
    <name type="common">Social amoeba</name>
    <dbReference type="NCBI Taxonomy" id="44689"/>
    <lineage>
        <taxon>Eukaryota</taxon>
        <taxon>Amoebozoa</taxon>
        <taxon>Evosea</taxon>
        <taxon>Eumycetozoa</taxon>
        <taxon>Dictyostelia</taxon>
        <taxon>Dictyosteliales</taxon>
        <taxon>Dictyosteliaceae</taxon>
        <taxon>Dictyostelium</taxon>
    </lineage>
</organism>
<gene>
    <name type="ORF">DDB_G0269994</name>
</gene>
<sequence length="335" mass="38954">MGDTYSLVLVAGYLSIFLFIGAIGYFYLSKPRIPSSNVNEQQQQQQQQQQQQQQPQINIEDEPQQRGGIGRMNLRNRRQPIINQRDEDTESSGSDSDNSTNSDNYDDDNGQEGEGEDIGVVAPGIVSNRSGKKIGKKKLEKLKLKDEKRKAREYQEYLREEKKKTDLEKEEALKEKRLEEKENEKLRKEEEERIRIEKERKEDEEYNLLKSQISLQESGITKNEDYDKSLLQLFIKYLKEHKICLLEDIAIEFNIKTNEVIDRIKTLDKQGLISGVIDDRGKFIYITKEEMEAVAKFVNKKGRVNIEQIALESNRLIDFSKKVVDNNDQDPVDTN</sequence>
<protein>
    <recommendedName>
        <fullName>DDRGK domain-containing protein 1</fullName>
    </recommendedName>
</protein>
<reference key="1">
    <citation type="journal article" date="2005" name="Nature">
        <title>The genome of the social amoeba Dictyostelium discoideum.</title>
        <authorList>
            <person name="Eichinger L."/>
            <person name="Pachebat J.A."/>
            <person name="Gloeckner G."/>
            <person name="Rajandream M.A."/>
            <person name="Sucgang R."/>
            <person name="Berriman M."/>
            <person name="Song J."/>
            <person name="Olsen R."/>
            <person name="Szafranski K."/>
            <person name="Xu Q."/>
            <person name="Tunggal B."/>
            <person name="Kummerfeld S."/>
            <person name="Madera M."/>
            <person name="Konfortov B.A."/>
            <person name="Rivero F."/>
            <person name="Bankier A.T."/>
            <person name="Lehmann R."/>
            <person name="Hamlin N."/>
            <person name="Davies R."/>
            <person name="Gaudet P."/>
            <person name="Fey P."/>
            <person name="Pilcher K."/>
            <person name="Chen G."/>
            <person name="Saunders D."/>
            <person name="Sodergren E.J."/>
            <person name="Davis P."/>
            <person name="Kerhornou A."/>
            <person name="Nie X."/>
            <person name="Hall N."/>
            <person name="Anjard C."/>
            <person name="Hemphill L."/>
            <person name="Bason N."/>
            <person name="Farbrother P."/>
            <person name="Desany B."/>
            <person name="Just E."/>
            <person name="Morio T."/>
            <person name="Rost R."/>
            <person name="Churcher C.M."/>
            <person name="Cooper J."/>
            <person name="Haydock S."/>
            <person name="van Driessche N."/>
            <person name="Cronin A."/>
            <person name="Goodhead I."/>
            <person name="Muzny D.M."/>
            <person name="Mourier T."/>
            <person name="Pain A."/>
            <person name="Lu M."/>
            <person name="Harper D."/>
            <person name="Lindsay R."/>
            <person name="Hauser H."/>
            <person name="James K.D."/>
            <person name="Quiles M."/>
            <person name="Madan Babu M."/>
            <person name="Saito T."/>
            <person name="Buchrieser C."/>
            <person name="Wardroper A."/>
            <person name="Felder M."/>
            <person name="Thangavelu M."/>
            <person name="Johnson D."/>
            <person name="Knights A."/>
            <person name="Loulseged H."/>
            <person name="Mungall K.L."/>
            <person name="Oliver K."/>
            <person name="Price C."/>
            <person name="Quail M.A."/>
            <person name="Urushihara H."/>
            <person name="Hernandez J."/>
            <person name="Rabbinowitsch E."/>
            <person name="Steffen D."/>
            <person name="Sanders M."/>
            <person name="Ma J."/>
            <person name="Kohara Y."/>
            <person name="Sharp S."/>
            <person name="Simmonds M.N."/>
            <person name="Spiegler S."/>
            <person name="Tivey A."/>
            <person name="Sugano S."/>
            <person name="White B."/>
            <person name="Walker D."/>
            <person name="Woodward J.R."/>
            <person name="Winckler T."/>
            <person name="Tanaka Y."/>
            <person name="Shaulsky G."/>
            <person name="Schleicher M."/>
            <person name="Weinstock G.M."/>
            <person name="Rosenthal A."/>
            <person name="Cox E.C."/>
            <person name="Chisholm R.L."/>
            <person name="Gibbs R.A."/>
            <person name="Loomis W.F."/>
            <person name="Platzer M."/>
            <person name="Kay R.R."/>
            <person name="Williams J.G."/>
            <person name="Dear P.H."/>
            <person name="Noegel A.A."/>
            <person name="Barrell B.G."/>
            <person name="Kuspa A."/>
        </authorList>
    </citation>
    <scope>NUCLEOTIDE SEQUENCE [LARGE SCALE GENOMIC DNA]</scope>
    <source>
        <strain>AX4</strain>
    </source>
</reference>
<proteinExistence type="inferred from homology"/>